<feature type="chain" id="PRO_0000449261" description="Type VI secretion system component TssA1">
    <location>
        <begin position="1"/>
        <end position="344"/>
    </location>
</feature>
<evidence type="ECO:0000269" key="1">
    <source>
    </source>
</evidence>
<evidence type="ECO:0000303" key="2">
    <source>
    </source>
</evidence>
<protein>
    <recommendedName>
        <fullName evidence="2">Type VI secretion system component TssA1</fullName>
    </recommendedName>
</protein>
<comment type="function">
    <text evidence="1">Core component of the H1 type VI (H1-T6SS) secretion system that plays a role in the release of toxins targeting both eukaryotic and prokaryotic species. Forms a dodecameric ring-shaped structure located at one end of the T6SS sheath. May properly attach the pre-assembled sheath onto the baseplate and/or stabilize the sheaths tubular structure.</text>
</comment>
<comment type="subunit">
    <text evidence="1">Homododecamer. Interacts with TssB1 and TssC1. Interacts with TssK1 and TssF1.</text>
</comment>
<comment type="disruption phenotype">
    <text evidence="1">Deletion abolishes the secretion of Hcp1, Tse3 and VgrG proteins, all markers of T6SS activity.</text>
</comment>
<accession>Q9I750</accession>
<proteinExistence type="evidence at protein level"/>
<name>TSSA1_PSEAE</name>
<gene>
    <name evidence="2" type="primary">tssA1</name>
    <name type="ordered locus">PA0082</name>
</gene>
<organism>
    <name type="scientific">Pseudomonas aeruginosa (strain ATCC 15692 / DSM 22644 / CIP 104116 / JCM 14847 / LMG 12228 / 1C / PRS 101 / PAO1)</name>
    <dbReference type="NCBI Taxonomy" id="208964"/>
    <lineage>
        <taxon>Bacteria</taxon>
        <taxon>Pseudomonadati</taxon>
        <taxon>Pseudomonadota</taxon>
        <taxon>Gammaproteobacteria</taxon>
        <taxon>Pseudomonadales</taxon>
        <taxon>Pseudomonadaceae</taxon>
        <taxon>Pseudomonas</taxon>
    </lineage>
</organism>
<keyword id="KW-1185">Reference proteome</keyword>
<dbReference type="EMBL" id="AE004091">
    <property type="protein sequence ID" value="AAG03472.1"/>
    <property type="molecule type" value="Genomic_DNA"/>
</dbReference>
<dbReference type="PIR" id="G83634">
    <property type="entry name" value="G83634"/>
</dbReference>
<dbReference type="RefSeq" id="NP_248772.1">
    <property type="nucleotide sequence ID" value="NC_002516.2"/>
</dbReference>
<dbReference type="SMR" id="Q9I750"/>
<dbReference type="STRING" id="208964.PA0082"/>
<dbReference type="PaxDb" id="208964-PA0082"/>
<dbReference type="DNASU" id="879402"/>
<dbReference type="GeneID" id="879402"/>
<dbReference type="KEGG" id="pae:PA0082"/>
<dbReference type="PATRIC" id="fig|208964.12.peg.86"/>
<dbReference type="PseudoCAP" id="PA0082"/>
<dbReference type="HOGENOM" id="CLU_060104_0_0_6"/>
<dbReference type="InParanoid" id="Q9I750"/>
<dbReference type="OrthoDB" id="9771118at2"/>
<dbReference type="PhylomeDB" id="Q9I750"/>
<dbReference type="BioCyc" id="PAER208964:G1FZ6-84-MONOMER"/>
<dbReference type="Proteomes" id="UP000002438">
    <property type="component" value="Chromosome"/>
</dbReference>
<dbReference type="GO" id="GO:0033104">
    <property type="term" value="C:type VI protein secretion system complex"/>
    <property type="evidence" value="ECO:0000314"/>
    <property type="project" value="PseudoCAP"/>
</dbReference>
<dbReference type="InterPro" id="IPR010657">
    <property type="entry name" value="ImpA_N"/>
</dbReference>
<dbReference type="InterPro" id="IPR017740">
    <property type="entry name" value="TssA-like"/>
</dbReference>
<dbReference type="NCBIfam" id="TIGR03363">
    <property type="entry name" value="VI_chp_8"/>
    <property type="match status" value="1"/>
</dbReference>
<dbReference type="PANTHER" id="PTHR37951">
    <property type="entry name" value="CYTOPLASMIC PROTEIN-RELATED"/>
    <property type="match status" value="1"/>
</dbReference>
<dbReference type="PANTHER" id="PTHR37951:SF1">
    <property type="entry name" value="TYPE VI SECRETION SYSTEM COMPONENT TSSA1"/>
    <property type="match status" value="1"/>
</dbReference>
<dbReference type="Pfam" id="PF06812">
    <property type="entry name" value="ImpA_N"/>
    <property type="match status" value="1"/>
</dbReference>
<reference key="1">
    <citation type="journal article" date="2000" name="Nature">
        <title>Complete genome sequence of Pseudomonas aeruginosa PAO1, an opportunistic pathogen.</title>
        <authorList>
            <person name="Stover C.K."/>
            <person name="Pham X.-Q.T."/>
            <person name="Erwin A.L."/>
            <person name="Mizoguchi S.D."/>
            <person name="Warrener P."/>
            <person name="Hickey M.J."/>
            <person name="Brinkman F.S.L."/>
            <person name="Hufnagle W.O."/>
            <person name="Kowalik D.J."/>
            <person name="Lagrou M."/>
            <person name="Garber R.L."/>
            <person name="Goltry L."/>
            <person name="Tolentino E."/>
            <person name="Westbrock-Wadman S."/>
            <person name="Yuan Y."/>
            <person name="Brody L.L."/>
            <person name="Coulter S.N."/>
            <person name="Folger K.R."/>
            <person name="Kas A."/>
            <person name="Larbig K."/>
            <person name="Lim R.M."/>
            <person name="Smith K.A."/>
            <person name="Spencer D.H."/>
            <person name="Wong G.K.-S."/>
            <person name="Wu Z."/>
            <person name="Paulsen I.T."/>
            <person name="Reizer J."/>
            <person name="Saier M.H. Jr."/>
            <person name="Hancock R.E.W."/>
            <person name="Lory S."/>
            <person name="Olson M.V."/>
        </authorList>
    </citation>
    <scope>NUCLEOTIDE SEQUENCE [LARGE SCALE GENOMIC DNA]</scope>
    <source>
        <strain>ATCC 15692 / DSM 22644 / CIP 104116 / JCM 14847 / LMG 12228 / 1C / PRS 101 / PAO1</strain>
    </source>
</reference>
<reference key="2">
    <citation type="journal article" date="2016" name="EMBO J.">
        <title>TssA forms a gp6-like ring attached to the type VI secretion sheath.</title>
        <authorList>
            <person name="Planamente S."/>
            <person name="Salih O."/>
            <person name="Manoli E."/>
            <person name="Albesa-Jove D."/>
            <person name="Freemont P.S."/>
            <person name="Filloux A."/>
        </authorList>
    </citation>
    <scope>FUNCTION</scope>
    <scope>DISRUPTION PHENOTYPE</scope>
    <scope>SUBUNIT</scope>
    <scope>INTERACTION WITH TSSB1; TSSC1; TSSF1 AND TSSK1</scope>
</reference>
<sequence length="344" mass="36679">MLDVPVLLAAVSPDSPCGDDLEYDAAFLELERIAQGQPERQMGDAVLPAEPPEWPRVRALASELFGRSKDLRVANLLLQSNVALDGLDGLADGLLLVRELLGQYWDGVYPLLDADDDNDPTFRINALTGLVAEPLLQLVWAIPLVRSRAFGPVNLRAALNAAGLQRFASETLSPEQIAGAFADADADALAATRRALDGAQEHALAIESGVAERVGSAQGLDLGPLRQLLRQALQVFDLYGPQGAGESLAPGAEAVADEQVGAAPVAAVAAPAPRASGEIANREDVLRQLDRLLEYYVRHEPSSPVPVLLKRAKTLVTADFAEIVRNLIPDGISQFETLRGPESE</sequence>